<keyword id="KW-0067">ATP-binding</keyword>
<keyword id="KW-0963">Cytoplasm</keyword>
<keyword id="KW-0903">Direct protein sequencing</keyword>
<keyword id="KW-0520">NAD</keyword>
<keyword id="KW-0547">Nucleotide-binding</keyword>
<keyword id="KW-0548">Nucleotidyltransferase</keyword>
<keyword id="KW-0539">Nucleus</keyword>
<keyword id="KW-0597">Phosphoprotein</keyword>
<keyword id="KW-0662">Pyridine nucleotide biosynthesis</keyword>
<keyword id="KW-1185">Reference proteome</keyword>
<keyword id="KW-0808">Transferase</keyword>
<name>NMA1_YEAST</name>
<reference key="1">
    <citation type="journal article" date="1997" name="Nature">
        <title>The nucleotide sequence of Saccharomyces cerevisiae chromosome XII.</title>
        <authorList>
            <person name="Johnston M."/>
            <person name="Hillier L.W."/>
            <person name="Riles L."/>
            <person name="Albermann K."/>
            <person name="Andre B."/>
            <person name="Ansorge W."/>
            <person name="Benes V."/>
            <person name="Brueckner M."/>
            <person name="Delius H."/>
            <person name="Dubois E."/>
            <person name="Duesterhoeft A."/>
            <person name="Entian K.-D."/>
            <person name="Floeth M."/>
            <person name="Goffeau A."/>
            <person name="Hebling U."/>
            <person name="Heumann K."/>
            <person name="Heuss-Neitzel D."/>
            <person name="Hilbert H."/>
            <person name="Hilger F."/>
            <person name="Kleine K."/>
            <person name="Koetter P."/>
            <person name="Louis E.J."/>
            <person name="Messenguy F."/>
            <person name="Mewes H.-W."/>
            <person name="Miosga T."/>
            <person name="Moestl D."/>
            <person name="Mueller-Auer S."/>
            <person name="Nentwich U."/>
            <person name="Obermaier B."/>
            <person name="Piravandi E."/>
            <person name="Pohl T.M."/>
            <person name="Portetelle D."/>
            <person name="Purnelle B."/>
            <person name="Rechmann S."/>
            <person name="Rieger M."/>
            <person name="Rinke M."/>
            <person name="Rose M."/>
            <person name="Scharfe M."/>
            <person name="Scherens B."/>
            <person name="Scholler P."/>
            <person name="Schwager C."/>
            <person name="Schwarz S."/>
            <person name="Underwood A.P."/>
            <person name="Urrestarazu L.A."/>
            <person name="Vandenbol M."/>
            <person name="Verhasselt P."/>
            <person name="Vierendeels F."/>
            <person name="Voet M."/>
            <person name="Volckaert G."/>
            <person name="Voss H."/>
            <person name="Wambutt R."/>
            <person name="Wedler E."/>
            <person name="Wedler H."/>
            <person name="Zimmermann F.K."/>
            <person name="Zollner A."/>
            <person name="Hani J."/>
            <person name="Hoheisel J.D."/>
        </authorList>
    </citation>
    <scope>NUCLEOTIDE SEQUENCE [LARGE SCALE GENOMIC DNA]</scope>
    <source>
        <strain>ATCC 204508 / S288c</strain>
    </source>
</reference>
<reference key="2">
    <citation type="journal article" date="2014" name="G3 (Bethesda)">
        <title>The reference genome sequence of Saccharomyces cerevisiae: Then and now.</title>
        <authorList>
            <person name="Engel S.R."/>
            <person name="Dietrich F.S."/>
            <person name="Fisk D.G."/>
            <person name="Binkley G."/>
            <person name="Balakrishnan R."/>
            <person name="Costanzo M.C."/>
            <person name="Dwight S.S."/>
            <person name="Hitz B.C."/>
            <person name="Karra K."/>
            <person name="Nash R.S."/>
            <person name="Weng S."/>
            <person name="Wong E.D."/>
            <person name="Lloyd P."/>
            <person name="Skrzypek M.S."/>
            <person name="Miyasato S.R."/>
            <person name="Simison M."/>
            <person name="Cherry J.M."/>
        </authorList>
    </citation>
    <scope>GENOME REANNOTATION</scope>
    <source>
        <strain>ATCC 204508 / S288c</strain>
    </source>
</reference>
<reference key="3">
    <citation type="journal article" date="1999" name="FEBS Lett.">
        <title>Identification and characterization of YLR328W, the Saccharomyces cerevisiae structural gene encoding NMN adenylyltransferase. Expression and characterization of the recombinant enzyme.</title>
        <authorList>
            <person name="Emanuelli M."/>
            <person name="Carnevali F."/>
            <person name="Lorenzi M."/>
            <person name="Raffaelli N."/>
            <person name="Amici A."/>
            <person name="Ruggieri S."/>
            <person name="Magni G."/>
        </authorList>
    </citation>
    <scope>PROTEIN SEQUENCE OF 1-22; 129-139 AND 256-265</scope>
    <scope>FUNCTION</scope>
    <scope>CATALYTIC ACTIVITY</scope>
    <scope>COFACTOR</scope>
    <scope>SUBUNIT</scope>
</reference>
<reference key="4">
    <citation type="journal article" date="1948" name="J. Biol. Chem.">
        <title>The participation of inorganic pyrophosphate in the reversible enzymatic synthesis of diphosphopyridine nucleotide.</title>
        <authorList>
            <person name="Kornberg A."/>
        </authorList>
    </citation>
    <scope>CATALYTIC ACTIVITY</scope>
</reference>
<reference key="5">
    <citation type="journal article" date="1967" name="Arch. Biochem. Biophys.">
        <title>The deamido-diphosphopyridine nucleotide and diphosphopyridine nucleotide pyrophosphorylases of Escherichia coli and yeast.</title>
        <authorList>
            <person name="Dahmen W."/>
            <person name="Webb B."/>
            <person name="Preiss J."/>
        </authorList>
    </citation>
    <scope>FUNCTION</scope>
    <scope>CATALYTIC ACTIVITY</scope>
</reference>
<reference key="6">
    <citation type="journal article" date="1986" name="Biochemistry">
        <title>Nicotinamide mononucleotide adenylyltransferase. Molecular and enzymatic properties of the homogeneous enzyme from baker's yeast.</title>
        <authorList>
            <person name="Natalini P."/>
            <person name="Ruggieri S."/>
            <person name="Raffaelli N."/>
            <person name="Magni G."/>
        </authorList>
    </citation>
    <scope>FUNCTION</scope>
    <scope>CATALYTIC ACTIVITY</scope>
    <scope>BIOPHYSICOCHEMICAL PROPERTIES</scope>
    <scope>SUBUNIT</scope>
</reference>
<reference key="7">
    <citation type="journal article" date="2002" name="J. Biol. Chem.">
        <title>Manipulation of a nuclear NAD+ salvage pathway delays aging without altering steady-state NAD+ levels.</title>
        <authorList>
            <person name="Anderson R.M."/>
            <person name="Bitterman K.J."/>
            <person name="Wood J.G."/>
            <person name="Medvedik O."/>
            <person name="Cohen H."/>
            <person name="Lin S.S."/>
            <person name="Manchester J.K."/>
            <person name="Gordon J.I."/>
            <person name="Sinclair D.A."/>
        </authorList>
    </citation>
    <scope>FUNCTION</scope>
</reference>
<reference key="8">
    <citation type="journal article" date="2003" name="Nature">
        <title>Global analysis of protein localization in budding yeast.</title>
        <authorList>
            <person name="Huh W.-K."/>
            <person name="Falvo J.V."/>
            <person name="Gerke L.C."/>
            <person name="Carroll A.S."/>
            <person name="Howson R.W."/>
            <person name="Weissman J.S."/>
            <person name="O'Shea E.K."/>
        </authorList>
    </citation>
    <scope>SUBCELLULAR LOCATION [LARGE SCALE ANALYSIS]</scope>
</reference>
<reference key="9">
    <citation type="journal article" date="2003" name="Nature">
        <title>Global analysis of protein expression in yeast.</title>
        <authorList>
            <person name="Ghaemmaghami S."/>
            <person name="Huh W.-K."/>
            <person name="Bower K."/>
            <person name="Howson R.W."/>
            <person name="Belle A."/>
            <person name="Dephoure N."/>
            <person name="O'Shea E.K."/>
            <person name="Weissman J.S."/>
        </authorList>
    </citation>
    <scope>LEVEL OF PROTEIN EXPRESSION [LARGE SCALE ANALYSIS]</scope>
</reference>
<reference key="10">
    <citation type="journal article" date="2003" name="Protein Expr. Purif.">
        <title>Identification and characterization of a second NMN adenylyltransferase gene in Saccharomyces cerevisiae.</title>
        <authorList>
            <person name="Emanuelli M."/>
            <person name="Amici A."/>
            <person name="Carnevali F."/>
            <person name="Pierella F."/>
            <person name="Raffaelli N."/>
            <person name="Magni G."/>
        </authorList>
    </citation>
    <scope>BIOPHYSICOCHEMICAL PROPERTIES</scope>
</reference>
<reference key="11">
    <citation type="journal article" date="2007" name="J. Proteome Res.">
        <title>Large-scale phosphorylation analysis of alpha-factor-arrested Saccharomyces cerevisiae.</title>
        <authorList>
            <person name="Li X."/>
            <person name="Gerber S.A."/>
            <person name="Rudner A.D."/>
            <person name="Beausoleil S.A."/>
            <person name="Haas W."/>
            <person name="Villen J."/>
            <person name="Elias J.E."/>
            <person name="Gygi S.P."/>
        </authorList>
    </citation>
    <scope>PHOSPHORYLATION [LARGE SCALE ANALYSIS] AT SER-91; SER-95 AND SER-96</scope>
    <scope>IDENTIFICATION BY MASS SPECTROMETRY [LARGE SCALE ANALYSIS]</scope>
    <source>
        <strain>ADR376</strain>
    </source>
</reference>
<reference key="12">
    <citation type="journal article" date="2008" name="Mol. Cell. Proteomics">
        <title>A multidimensional chromatography technology for in-depth phosphoproteome analysis.</title>
        <authorList>
            <person name="Albuquerque C.P."/>
            <person name="Smolka M.B."/>
            <person name="Payne S.H."/>
            <person name="Bafna V."/>
            <person name="Eng J."/>
            <person name="Zhou H."/>
        </authorList>
    </citation>
    <scope>IDENTIFICATION BY MASS SPECTROMETRY [LARGE SCALE ANALYSIS]</scope>
</reference>
<reference key="13">
    <citation type="journal article" date="2009" name="Science">
        <title>Global analysis of Cdk1 substrate phosphorylation sites provides insights into evolution.</title>
        <authorList>
            <person name="Holt L.J."/>
            <person name="Tuch B.B."/>
            <person name="Villen J."/>
            <person name="Johnson A.D."/>
            <person name="Gygi S.P."/>
            <person name="Morgan D.O."/>
        </authorList>
    </citation>
    <scope>PHOSPHORYLATION [LARGE SCALE ANALYSIS] AT SER-91; SER-95; SER-96 AND SER-111</scope>
    <scope>IDENTIFICATION BY MASS SPECTROMETRY [LARGE SCALE ANALYSIS]</scope>
</reference>
<reference key="14">
    <citation type="journal article" date="2014" name="J. Biol. Chem.">
        <title>YCL047C/POF1 is a novel nicotinamide mononucleotide adenylyltransferase (NMNAT) in Saccharomyces cerevisiae.</title>
        <authorList>
            <person name="Kato M."/>
            <person name="Lin S.J."/>
        </authorList>
    </citation>
    <scope>INDUCTION</scope>
    <source>
        <strain>ATCC 201389 / BY4742</strain>
    </source>
</reference>
<protein>
    <recommendedName>
        <fullName evidence="15">Nicotinamide/nicotinic acid mononucleotide adenylyltransferase 1</fullName>
        <shortName>NMN/NaMN adenylyltransferase 1</shortName>
        <ecNumber evidence="3 11">2.7.7.1</ecNumber>
        <ecNumber evidence="16">2.7.7.18</ecNumber>
    </recommendedName>
    <alternativeName>
        <fullName evidence="14">NAD(+) diphosphorylase 1</fullName>
    </alternativeName>
    <alternativeName>
        <fullName evidence="14">NAD(+) pyrophosphorylase 1</fullName>
    </alternativeName>
    <alternativeName>
        <fullName evidence="13">Nicotinamide-nucleotide adenylyltransferase 1</fullName>
        <shortName>NMN adenylyltransferase 1</shortName>
        <shortName>NMNAT 1</shortName>
    </alternativeName>
    <alternativeName>
        <fullName evidence="12">Nicotinate-nucleotide adenylyltransferase 1</fullName>
        <shortName>NaMN adenylyltransferase 1</shortName>
        <shortName>NaMNAT 1</shortName>
    </alternativeName>
</protein>
<dbReference type="EC" id="2.7.7.1" evidence="3 11"/>
<dbReference type="EC" id="2.7.7.18" evidence="16"/>
<dbReference type="EMBL" id="U20618">
    <property type="protein sequence ID" value="AAB64524.1"/>
    <property type="molecule type" value="Genomic_DNA"/>
</dbReference>
<dbReference type="EMBL" id="BK006945">
    <property type="protein sequence ID" value="DAA09636.1"/>
    <property type="molecule type" value="Genomic_DNA"/>
</dbReference>
<dbReference type="PIR" id="S53405">
    <property type="entry name" value="S53405"/>
</dbReference>
<dbReference type="RefSeq" id="NP_013432.1">
    <property type="nucleotide sequence ID" value="NM_001182217.1"/>
</dbReference>
<dbReference type="SMR" id="Q06178"/>
<dbReference type="BioGRID" id="31592">
    <property type="interactions" value="52"/>
</dbReference>
<dbReference type="DIP" id="DIP-1228N"/>
<dbReference type="FunCoup" id="Q06178">
    <property type="interactions" value="543"/>
</dbReference>
<dbReference type="IntAct" id="Q06178">
    <property type="interactions" value="11"/>
</dbReference>
<dbReference type="MINT" id="Q06178"/>
<dbReference type="STRING" id="4932.YLR328W"/>
<dbReference type="iPTMnet" id="Q06178"/>
<dbReference type="PaxDb" id="4932-YLR328W"/>
<dbReference type="PeptideAtlas" id="Q06178"/>
<dbReference type="EnsemblFungi" id="YLR328W_mRNA">
    <property type="protein sequence ID" value="YLR328W"/>
    <property type="gene ID" value="YLR328W"/>
</dbReference>
<dbReference type="GeneID" id="851039"/>
<dbReference type="KEGG" id="sce:YLR328W"/>
<dbReference type="AGR" id="SGD:S000004320"/>
<dbReference type="SGD" id="S000004320">
    <property type="gene designation" value="NMA1"/>
</dbReference>
<dbReference type="VEuPathDB" id="FungiDB:YLR328W"/>
<dbReference type="eggNOG" id="KOG3199">
    <property type="taxonomic scope" value="Eukaryota"/>
</dbReference>
<dbReference type="GeneTree" id="ENSGT00950000183179"/>
<dbReference type="HOGENOM" id="CLU_033366_5_0_1"/>
<dbReference type="InParanoid" id="Q06178"/>
<dbReference type="OMA" id="VPHGIQR"/>
<dbReference type="OrthoDB" id="422187at2759"/>
<dbReference type="BioCyc" id="MetaCyc:YLR328W-MONOMER"/>
<dbReference type="BioCyc" id="YEAST:YLR328W-MONOMER"/>
<dbReference type="Reactome" id="R-SCE-196807">
    <property type="pathway name" value="Nicotinate metabolism"/>
</dbReference>
<dbReference type="UniPathway" id="UPA00253">
    <property type="reaction ID" value="UER00332"/>
</dbReference>
<dbReference type="UniPathway" id="UPA00253">
    <property type="reaction ID" value="UER00600"/>
</dbReference>
<dbReference type="BioGRID-ORCS" id="851039">
    <property type="hits" value="0 hits in 10 CRISPR screens"/>
</dbReference>
<dbReference type="PRO" id="PR:Q06178"/>
<dbReference type="Proteomes" id="UP000002311">
    <property type="component" value="Chromosome XII"/>
</dbReference>
<dbReference type="RNAct" id="Q06178">
    <property type="molecule type" value="protein"/>
</dbReference>
<dbReference type="GO" id="GO:0005737">
    <property type="term" value="C:cytoplasm"/>
    <property type="evidence" value="ECO:0007005"/>
    <property type="project" value="SGD"/>
</dbReference>
<dbReference type="GO" id="GO:0005634">
    <property type="term" value="C:nucleus"/>
    <property type="evidence" value="ECO:0007005"/>
    <property type="project" value="SGD"/>
</dbReference>
<dbReference type="GO" id="GO:0005524">
    <property type="term" value="F:ATP binding"/>
    <property type="evidence" value="ECO:0007669"/>
    <property type="project" value="UniProtKB-KW"/>
</dbReference>
<dbReference type="GO" id="GO:0042802">
    <property type="term" value="F:identical protein binding"/>
    <property type="evidence" value="ECO:0000353"/>
    <property type="project" value="IntAct"/>
</dbReference>
<dbReference type="GO" id="GO:0000309">
    <property type="term" value="F:nicotinamide-nucleotide adenylyltransferase activity"/>
    <property type="evidence" value="ECO:0000314"/>
    <property type="project" value="SGD"/>
</dbReference>
<dbReference type="GO" id="GO:0004515">
    <property type="term" value="F:nicotinate-nucleotide adenylyltransferase activity"/>
    <property type="evidence" value="ECO:0000318"/>
    <property type="project" value="GO_Central"/>
</dbReference>
<dbReference type="GO" id="GO:0009435">
    <property type="term" value="P:NAD biosynthetic process"/>
    <property type="evidence" value="ECO:0000314"/>
    <property type="project" value="SGD"/>
</dbReference>
<dbReference type="CDD" id="cd09286">
    <property type="entry name" value="NMNAT_Eukarya"/>
    <property type="match status" value="1"/>
</dbReference>
<dbReference type="FunFam" id="3.40.50.620:FF:000074">
    <property type="entry name" value="Nicotinamide-nucleotide adenylyltransferase"/>
    <property type="match status" value="1"/>
</dbReference>
<dbReference type="Gene3D" id="3.40.50.620">
    <property type="entry name" value="HUPs"/>
    <property type="match status" value="1"/>
</dbReference>
<dbReference type="InterPro" id="IPR004821">
    <property type="entry name" value="Cyt_trans-like"/>
</dbReference>
<dbReference type="InterPro" id="IPR051182">
    <property type="entry name" value="Euk_NMN_adenylyltrnsfrase"/>
</dbReference>
<dbReference type="InterPro" id="IPR005248">
    <property type="entry name" value="NadD/NMNAT"/>
</dbReference>
<dbReference type="InterPro" id="IPR045094">
    <property type="entry name" value="NMNAT_euk"/>
</dbReference>
<dbReference type="InterPro" id="IPR014729">
    <property type="entry name" value="Rossmann-like_a/b/a_fold"/>
</dbReference>
<dbReference type="NCBIfam" id="TIGR00482">
    <property type="entry name" value="nicotinate (nicotinamide) nucleotide adenylyltransferase"/>
    <property type="match status" value="1"/>
</dbReference>
<dbReference type="PANTHER" id="PTHR12039">
    <property type="entry name" value="NICOTINAMIDE MONONUCLEOTIDE ADENYLYLTRANSFERASE"/>
    <property type="match status" value="1"/>
</dbReference>
<dbReference type="PANTHER" id="PTHR12039:SF0">
    <property type="entry name" value="NICOTINAMIDE-NUCLEOTIDE ADENYLYLTRANSFERASE"/>
    <property type="match status" value="1"/>
</dbReference>
<dbReference type="Pfam" id="PF01467">
    <property type="entry name" value="CTP_transf_like"/>
    <property type="match status" value="1"/>
</dbReference>
<dbReference type="SUPFAM" id="SSF52374">
    <property type="entry name" value="Nucleotidylyl transferase"/>
    <property type="match status" value="1"/>
</dbReference>
<feature type="chain" id="PRO_0000135018" description="Nicotinamide/nicotinic acid mononucleotide adenylyltransferase 1">
    <location>
        <begin position="1"/>
        <end position="401"/>
    </location>
</feature>
<feature type="region of interest" description="Disordered" evidence="2">
    <location>
        <begin position="1"/>
        <end position="30"/>
    </location>
</feature>
<feature type="region of interest" description="Disordered" evidence="2">
    <location>
        <begin position="48"/>
        <end position="123"/>
    </location>
</feature>
<feature type="compositionally biased region" description="Basic residues" evidence="2">
    <location>
        <begin position="52"/>
        <end position="69"/>
    </location>
</feature>
<feature type="binding site" evidence="1">
    <location>
        <position position="173"/>
    </location>
    <ligand>
        <name>NAD(+)</name>
        <dbReference type="ChEBI" id="CHEBI:57540"/>
    </ligand>
</feature>
<feature type="binding site" evidence="1">
    <location>
        <position position="174"/>
    </location>
    <ligand>
        <name>NAD(+)</name>
        <dbReference type="ChEBI" id="CHEBI:57540"/>
    </ligand>
</feature>
<feature type="binding site" description="in other chain" evidence="1">
    <location>
        <position position="181"/>
    </location>
    <ligand>
        <name>ATP</name>
        <dbReference type="ChEBI" id="CHEBI:30616"/>
        <note>ligand shared between dimeric partners</note>
    </ligand>
</feature>
<feature type="binding site" evidence="1">
    <location>
        <position position="253"/>
    </location>
    <ligand>
        <name>NAD(+)</name>
        <dbReference type="ChEBI" id="CHEBI:57540"/>
    </ligand>
</feature>
<feature type="binding site" evidence="1">
    <location>
        <position position="288"/>
    </location>
    <ligand>
        <name>NAD(+)</name>
        <dbReference type="ChEBI" id="CHEBI:57540"/>
    </ligand>
</feature>
<feature type="binding site" evidence="1">
    <location>
        <position position="290"/>
    </location>
    <ligand>
        <name>NAD(+)</name>
        <dbReference type="ChEBI" id="CHEBI:57540"/>
    </ligand>
</feature>
<feature type="binding site" evidence="1">
    <location>
        <position position="301"/>
    </location>
    <ligand>
        <name>NAD(+)</name>
        <dbReference type="ChEBI" id="CHEBI:57540"/>
    </ligand>
</feature>
<feature type="binding site" evidence="1">
    <location>
        <position position="320"/>
    </location>
    <ligand>
        <name>NAD(+)</name>
        <dbReference type="ChEBI" id="CHEBI:57540"/>
    </ligand>
</feature>
<feature type="binding site" evidence="1">
    <location>
        <position position="351"/>
    </location>
    <ligand>
        <name>NAD(+)</name>
        <dbReference type="ChEBI" id="CHEBI:57540"/>
    </ligand>
</feature>
<feature type="binding site" description="in other chain" evidence="1">
    <location>
        <begin position="356"/>
        <end position="359"/>
    </location>
    <ligand>
        <name>ATP</name>
        <dbReference type="ChEBI" id="CHEBI:30616"/>
        <note>ligand shared between dimeric partners</note>
    </ligand>
</feature>
<feature type="modified residue" description="Phosphoserine" evidence="20 21">
    <location>
        <position position="91"/>
    </location>
</feature>
<feature type="modified residue" description="Phosphoserine" evidence="20 21">
    <location>
        <position position="95"/>
    </location>
</feature>
<feature type="modified residue" description="Phosphoserine" evidence="20 21">
    <location>
        <position position="96"/>
    </location>
</feature>
<feature type="modified residue" description="Phosphoserine" evidence="21">
    <location>
        <position position="111"/>
    </location>
</feature>
<organism>
    <name type="scientific">Saccharomyces cerevisiae (strain ATCC 204508 / S288c)</name>
    <name type="common">Baker's yeast</name>
    <dbReference type="NCBI Taxonomy" id="559292"/>
    <lineage>
        <taxon>Eukaryota</taxon>
        <taxon>Fungi</taxon>
        <taxon>Dikarya</taxon>
        <taxon>Ascomycota</taxon>
        <taxon>Saccharomycotina</taxon>
        <taxon>Saccharomycetes</taxon>
        <taxon>Saccharomycetales</taxon>
        <taxon>Saccharomycetaceae</taxon>
        <taxon>Saccharomyces</taxon>
    </lineage>
</organism>
<sequence>MDPTRAPDFKPPSADEELIPPPDPESKIPKSIPIIPYVLADANSSIDAPFNIKRKKKHPKHHHHHHHSRKEGNDKKHQHIPLNQDDFQPLSAEVSSEDDDADFRSKERYGSDSTTESETRGVQKYQIADLEEVPHGIVRQARTLEDYEFPSHRLSKKLLDPNKLPLVIVACGSFSPITYLHLRMFEMALDAISEQTRFEVIGGYYSPVSDNYQKQGLAPSYHRVRMCELACERTSSWLMVDAWESLQPSYTRTAKVLDHFNHEINIKRGGVATVTGEKIGVKIMLLAGGDLIESMGEPNVWADADLHHILGNYGCLIVERTGSDVRSFLLSHDIMYEHRRNILIIKQLIYNDISSTKVRLFIRRAMSVQYLLPNSVIRYIQEHRLYVDQTEPVKQVLGNKE</sequence>
<gene>
    <name evidence="12" type="primary">NMA1</name>
    <name evidence="19" type="ordered locus">YLR328W</name>
    <name type="ORF">L8543.16</name>
</gene>
<accession>Q06178</accession>
<accession>D6VYX0</accession>
<evidence type="ECO:0000250" key="1">
    <source>
        <dbReference type="UniProtKB" id="Q96T66"/>
    </source>
</evidence>
<evidence type="ECO:0000256" key="2">
    <source>
        <dbReference type="SAM" id="MobiDB-lite"/>
    </source>
</evidence>
<evidence type="ECO:0000269" key="3">
    <source>
    </source>
</evidence>
<evidence type="ECO:0000269" key="4">
    <source>
    </source>
</evidence>
<evidence type="ECO:0000269" key="5">
    <source>
    </source>
</evidence>
<evidence type="ECO:0000269" key="6">
    <source>
    </source>
</evidence>
<evidence type="ECO:0000269" key="7">
    <source>
    </source>
</evidence>
<evidence type="ECO:0000269" key="8">
    <source>
    </source>
</evidence>
<evidence type="ECO:0000269" key="9">
    <source>
    </source>
</evidence>
<evidence type="ECO:0000269" key="10">
    <source>
    </source>
</evidence>
<evidence type="ECO:0000269" key="11">
    <source>
    </source>
</evidence>
<evidence type="ECO:0000303" key="12">
    <source>
    </source>
</evidence>
<evidence type="ECO:0000303" key="13">
    <source>
    </source>
</evidence>
<evidence type="ECO:0000303" key="14">
    <source>
    </source>
</evidence>
<evidence type="ECO:0000305" key="15"/>
<evidence type="ECO:0000305" key="16">
    <source>
    </source>
</evidence>
<evidence type="ECO:0000305" key="17">
    <source>
    </source>
</evidence>
<evidence type="ECO:0000305" key="18">
    <source>
    </source>
</evidence>
<evidence type="ECO:0000312" key="19">
    <source>
        <dbReference type="SGD" id="S000004320"/>
    </source>
</evidence>
<evidence type="ECO:0007744" key="20">
    <source>
    </source>
</evidence>
<evidence type="ECO:0007744" key="21">
    <source>
    </source>
</evidence>
<proteinExistence type="evidence at protein level"/>
<comment type="function">
    <text evidence="3 4 10 11">Catalyzes the formation of NAD(+) from nicotinamide mononucleotide (NMN) and ATP. Can also use the deamidated form; nicotinic acid mononucleotide (NaMN) as substrate to form deamido-NAD(+) (NaAD). Key enzyme in both de novo and salvage pathways for NAD(+) biosynthesis. Predominantly acts in the salvage pathways via NMN.</text>
</comment>
<comment type="catalytic activity">
    <reaction evidence="3 8 10">
        <text>beta-nicotinamide D-ribonucleotide + ATP + H(+) = diphosphate + NAD(+)</text>
        <dbReference type="Rhea" id="RHEA:21360"/>
        <dbReference type="ChEBI" id="CHEBI:14649"/>
        <dbReference type="ChEBI" id="CHEBI:15378"/>
        <dbReference type="ChEBI" id="CHEBI:30616"/>
        <dbReference type="ChEBI" id="CHEBI:33019"/>
        <dbReference type="ChEBI" id="CHEBI:57540"/>
        <dbReference type="EC" id="2.7.7.1"/>
    </reaction>
</comment>
<comment type="catalytic activity">
    <reaction evidence="16">
        <text>nicotinate beta-D-ribonucleotide + ATP + H(+) = deamido-NAD(+) + diphosphate</text>
        <dbReference type="Rhea" id="RHEA:22860"/>
        <dbReference type="ChEBI" id="CHEBI:15378"/>
        <dbReference type="ChEBI" id="CHEBI:30616"/>
        <dbReference type="ChEBI" id="CHEBI:33019"/>
        <dbReference type="ChEBI" id="CHEBI:57502"/>
        <dbReference type="ChEBI" id="CHEBI:58437"/>
        <dbReference type="EC" id="2.7.7.18"/>
    </reaction>
</comment>
<comment type="cofactor">
    <cofactor evidence="3">
        <name>Ni(2+)</name>
        <dbReference type="ChEBI" id="CHEBI:49786"/>
    </cofactor>
    <text evidence="3">Divalent metal cation.</text>
</comment>
<comment type="biophysicochemical properties">
    <kinetics>
        <KM evidence="5 10">0.11 mM for ATP</KM>
        <KM evidence="5 10">0.19 mM for NMN</KM>
        <KM evidence="10">5 mM for NaMN</KM>
        <KM evidence="5">0.073 mM for NAD(+)</KM>
        <KM evidence="5">0.083 mM for diphosphate</KM>
    </kinetics>
    <phDependence>
        <text evidence="5 10">Optimum pH is 7.2-8.4.</text>
    </phDependence>
</comment>
<comment type="pathway">
    <text evidence="16">Cofactor biosynthesis; NAD(+) biosynthesis; deamido-NAD(+) from nicotinate D-ribonucleotide: step 1/1.</text>
</comment>
<comment type="pathway">
    <text evidence="17 18">Cofactor biosynthesis; NAD(+) biosynthesis; NAD(+) from nicotinamide D-ribonucleotide: step 1/1.</text>
</comment>
<comment type="subunit">
    <text evidence="3 10">Homotetramer.</text>
</comment>
<comment type="interaction">
    <interactant intactId="EBI-11803">
        <id>Q06178</id>
    </interactant>
    <interactant intactId="EBI-11803">
        <id>Q06178</id>
        <label>NMA1</label>
    </interactant>
    <organismsDiffer>false</organismsDiffer>
    <experiments>4</experiments>
</comment>
<comment type="interaction">
    <interactant intactId="EBI-11803">
        <id>Q06178</id>
    </interactant>
    <interactant intactId="EBI-23073">
        <id>P53204</id>
        <label>NMA2</label>
    </interactant>
    <organismsDiffer>false</organismsDiffer>
    <experiments>7</experiments>
</comment>
<comment type="subcellular location">
    <subcellularLocation>
        <location evidence="6">Cytoplasm</location>
    </subcellularLocation>
    <subcellularLocation>
        <location evidence="6">Nucleus</location>
    </subcellularLocation>
</comment>
<comment type="induction">
    <text evidence="9">Expression is high in early log-phase and significantly drops as cells enter late log phase.</text>
</comment>
<comment type="miscellaneous">
    <text evidence="7">Present with 5130 molecules/cell in log phase SD medium.</text>
</comment>
<comment type="similarity">
    <text evidence="15">Belongs to the eukaryotic NMN adenylyltransferase family.</text>
</comment>